<feature type="chain" id="PRO_0000306497" description="Imidazolonepropionase">
    <location>
        <begin position="1"/>
        <end position="395"/>
    </location>
</feature>
<feature type="binding site" evidence="1">
    <location>
        <position position="63"/>
    </location>
    <ligand>
        <name>Fe(3+)</name>
        <dbReference type="ChEBI" id="CHEBI:29034"/>
    </ligand>
</feature>
<feature type="binding site" evidence="1">
    <location>
        <position position="63"/>
    </location>
    <ligand>
        <name>Zn(2+)</name>
        <dbReference type="ChEBI" id="CHEBI:29105"/>
    </ligand>
</feature>
<feature type="binding site" evidence="1">
    <location>
        <position position="65"/>
    </location>
    <ligand>
        <name>Fe(3+)</name>
        <dbReference type="ChEBI" id="CHEBI:29034"/>
    </ligand>
</feature>
<feature type="binding site" evidence="1">
    <location>
        <position position="65"/>
    </location>
    <ligand>
        <name>Zn(2+)</name>
        <dbReference type="ChEBI" id="CHEBI:29105"/>
    </ligand>
</feature>
<feature type="binding site" evidence="1">
    <location>
        <position position="72"/>
    </location>
    <ligand>
        <name>4-imidazolone-5-propanoate</name>
        <dbReference type="ChEBI" id="CHEBI:77893"/>
    </ligand>
</feature>
<feature type="binding site" evidence="1">
    <location>
        <position position="135"/>
    </location>
    <ligand>
        <name>4-imidazolone-5-propanoate</name>
        <dbReference type="ChEBI" id="CHEBI:77893"/>
    </ligand>
</feature>
<feature type="binding site" evidence="1">
    <location>
        <position position="135"/>
    </location>
    <ligand>
        <name>N-formimidoyl-L-glutamate</name>
        <dbReference type="ChEBI" id="CHEBI:58928"/>
    </ligand>
</feature>
<feature type="binding site" evidence="1">
    <location>
        <position position="168"/>
    </location>
    <ligand>
        <name>4-imidazolone-5-propanoate</name>
        <dbReference type="ChEBI" id="CHEBI:77893"/>
    </ligand>
</feature>
<feature type="binding site" evidence="1">
    <location>
        <position position="233"/>
    </location>
    <ligand>
        <name>Fe(3+)</name>
        <dbReference type="ChEBI" id="CHEBI:29034"/>
    </ligand>
</feature>
<feature type="binding site" evidence="1">
    <location>
        <position position="233"/>
    </location>
    <ligand>
        <name>Zn(2+)</name>
        <dbReference type="ChEBI" id="CHEBI:29105"/>
    </ligand>
</feature>
<feature type="binding site" evidence="1">
    <location>
        <position position="236"/>
    </location>
    <ligand>
        <name>4-imidazolone-5-propanoate</name>
        <dbReference type="ChEBI" id="CHEBI:77893"/>
    </ligand>
</feature>
<feature type="binding site" evidence="1">
    <location>
        <position position="308"/>
    </location>
    <ligand>
        <name>Fe(3+)</name>
        <dbReference type="ChEBI" id="CHEBI:29034"/>
    </ligand>
</feature>
<feature type="binding site" evidence="1">
    <location>
        <position position="308"/>
    </location>
    <ligand>
        <name>Zn(2+)</name>
        <dbReference type="ChEBI" id="CHEBI:29105"/>
    </ligand>
</feature>
<feature type="binding site" evidence="1">
    <location>
        <position position="310"/>
    </location>
    <ligand>
        <name>N-formimidoyl-L-glutamate</name>
        <dbReference type="ChEBI" id="CHEBI:58928"/>
    </ligand>
</feature>
<feature type="binding site" evidence="1">
    <location>
        <position position="312"/>
    </location>
    <ligand>
        <name>N-formimidoyl-L-glutamate</name>
        <dbReference type="ChEBI" id="CHEBI:58928"/>
    </ligand>
</feature>
<feature type="binding site" evidence="1">
    <location>
        <position position="313"/>
    </location>
    <ligand>
        <name>4-imidazolone-5-propanoate</name>
        <dbReference type="ChEBI" id="CHEBI:77893"/>
    </ligand>
</feature>
<gene>
    <name evidence="1" type="primary">hutI</name>
    <name type="ordered locus">RHOS4_15260</name>
    <name type="ORF">RSP_2934</name>
</gene>
<accession>Q3J290</accession>
<organism>
    <name type="scientific">Cereibacter sphaeroides (strain ATCC 17023 / DSM 158 / JCM 6121 / CCUG 31486 / LMG 2827 / NBRC 12203 / NCIMB 8253 / ATH 2.4.1.)</name>
    <name type="common">Rhodobacter sphaeroides</name>
    <dbReference type="NCBI Taxonomy" id="272943"/>
    <lineage>
        <taxon>Bacteria</taxon>
        <taxon>Pseudomonadati</taxon>
        <taxon>Pseudomonadota</taxon>
        <taxon>Alphaproteobacteria</taxon>
        <taxon>Rhodobacterales</taxon>
        <taxon>Paracoccaceae</taxon>
        <taxon>Cereibacter</taxon>
    </lineage>
</organism>
<reference key="1">
    <citation type="submission" date="2005-09" db="EMBL/GenBank/DDBJ databases">
        <title>Complete sequence of chromosome 1 of Rhodobacter sphaeroides 2.4.1.</title>
        <authorList>
            <person name="Copeland A."/>
            <person name="Lucas S."/>
            <person name="Lapidus A."/>
            <person name="Barry K."/>
            <person name="Detter J.C."/>
            <person name="Glavina T."/>
            <person name="Hammon N."/>
            <person name="Israni S."/>
            <person name="Pitluck S."/>
            <person name="Richardson P."/>
            <person name="Mackenzie C."/>
            <person name="Choudhary M."/>
            <person name="Larimer F."/>
            <person name="Hauser L.J."/>
            <person name="Land M."/>
            <person name="Donohue T.J."/>
            <person name="Kaplan S."/>
        </authorList>
    </citation>
    <scope>NUCLEOTIDE SEQUENCE [LARGE SCALE GENOMIC DNA]</scope>
    <source>
        <strain>ATCC 17023 / DSM 158 / JCM 6121 / CCUG 31486 / LMG 2827 / NBRC 12203 / NCIMB 8253 / ATH 2.4.1.</strain>
    </source>
</reference>
<proteinExistence type="inferred from homology"/>
<protein>
    <recommendedName>
        <fullName evidence="1">Imidazolonepropionase</fullName>
        <ecNumber evidence="1">3.5.2.7</ecNumber>
    </recommendedName>
    <alternativeName>
        <fullName evidence="1">Imidazolone-5-propionate hydrolase</fullName>
    </alternativeName>
</protein>
<name>HUTI_CERS4</name>
<dbReference type="EC" id="3.5.2.7" evidence="1"/>
<dbReference type="EMBL" id="CP000143">
    <property type="protein sequence ID" value="ABA79094.1"/>
    <property type="molecule type" value="Genomic_DNA"/>
</dbReference>
<dbReference type="RefSeq" id="WP_011337858.1">
    <property type="nucleotide sequence ID" value="NC_007493.2"/>
</dbReference>
<dbReference type="RefSeq" id="YP_352995.1">
    <property type="nucleotide sequence ID" value="NC_007493.2"/>
</dbReference>
<dbReference type="SMR" id="Q3J290"/>
<dbReference type="STRING" id="272943.RSP_2934"/>
<dbReference type="EnsemblBacteria" id="ABA79094">
    <property type="protein sequence ID" value="ABA79094"/>
    <property type="gene ID" value="RSP_2934"/>
</dbReference>
<dbReference type="GeneID" id="3720674"/>
<dbReference type="KEGG" id="rsp:RSP_2934"/>
<dbReference type="PATRIC" id="fig|272943.9.peg.1870"/>
<dbReference type="eggNOG" id="COG1228">
    <property type="taxonomic scope" value="Bacteria"/>
</dbReference>
<dbReference type="OrthoDB" id="9776455at2"/>
<dbReference type="PhylomeDB" id="Q3J290"/>
<dbReference type="UniPathway" id="UPA00379">
    <property type="reaction ID" value="UER00551"/>
</dbReference>
<dbReference type="Proteomes" id="UP000002703">
    <property type="component" value="Chromosome 1"/>
</dbReference>
<dbReference type="GO" id="GO:0005737">
    <property type="term" value="C:cytoplasm"/>
    <property type="evidence" value="ECO:0007669"/>
    <property type="project" value="UniProtKB-SubCell"/>
</dbReference>
<dbReference type="GO" id="GO:0050480">
    <property type="term" value="F:imidazolonepropionase activity"/>
    <property type="evidence" value="ECO:0007669"/>
    <property type="project" value="UniProtKB-UniRule"/>
</dbReference>
<dbReference type="GO" id="GO:0005506">
    <property type="term" value="F:iron ion binding"/>
    <property type="evidence" value="ECO:0007669"/>
    <property type="project" value="UniProtKB-UniRule"/>
</dbReference>
<dbReference type="GO" id="GO:0008270">
    <property type="term" value="F:zinc ion binding"/>
    <property type="evidence" value="ECO:0007669"/>
    <property type="project" value="UniProtKB-UniRule"/>
</dbReference>
<dbReference type="GO" id="GO:0019556">
    <property type="term" value="P:L-histidine catabolic process to glutamate and formamide"/>
    <property type="evidence" value="ECO:0007669"/>
    <property type="project" value="UniProtKB-UniPathway"/>
</dbReference>
<dbReference type="GO" id="GO:0019557">
    <property type="term" value="P:L-histidine catabolic process to glutamate and formate"/>
    <property type="evidence" value="ECO:0007669"/>
    <property type="project" value="UniProtKB-UniPathway"/>
</dbReference>
<dbReference type="FunFam" id="3.20.20.140:FF:000007">
    <property type="entry name" value="Imidazolonepropionase"/>
    <property type="match status" value="1"/>
</dbReference>
<dbReference type="Gene3D" id="3.20.20.140">
    <property type="entry name" value="Metal-dependent hydrolases"/>
    <property type="match status" value="1"/>
</dbReference>
<dbReference type="Gene3D" id="2.30.40.10">
    <property type="entry name" value="Urease, subunit C, domain 1"/>
    <property type="match status" value="1"/>
</dbReference>
<dbReference type="HAMAP" id="MF_00372">
    <property type="entry name" value="HutI"/>
    <property type="match status" value="1"/>
</dbReference>
<dbReference type="InterPro" id="IPR006680">
    <property type="entry name" value="Amidohydro-rel"/>
</dbReference>
<dbReference type="InterPro" id="IPR005920">
    <property type="entry name" value="HutI"/>
</dbReference>
<dbReference type="InterPro" id="IPR011059">
    <property type="entry name" value="Metal-dep_hydrolase_composite"/>
</dbReference>
<dbReference type="InterPro" id="IPR032466">
    <property type="entry name" value="Metal_Hydrolase"/>
</dbReference>
<dbReference type="NCBIfam" id="TIGR01224">
    <property type="entry name" value="hutI"/>
    <property type="match status" value="1"/>
</dbReference>
<dbReference type="PANTHER" id="PTHR42752">
    <property type="entry name" value="IMIDAZOLONEPROPIONASE"/>
    <property type="match status" value="1"/>
</dbReference>
<dbReference type="PANTHER" id="PTHR42752:SF1">
    <property type="entry name" value="IMIDAZOLONEPROPIONASE-RELATED"/>
    <property type="match status" value="1"/>
</dbReference>
<dbReference type="Pfam" id="PF01979">
    <property type="entry name" value="Amidohydro_1"/>
    <property type="match status" value="1"/>
</dbReference>
<dbReference type="SUPFAM" id="SSF51338">
    <property type="entry name" value="Composite domain of metallo-dependent hydrolases"/>
    <property type="match status" value="1"/>
</dbReference>
<dbReference type="SUPFAM" id="SSF51556">
    <property type="entry name" value="Metallo-dependent hydrolases"/>
    <property type="match status" value="1"/>
</dbReference>
<keyword id="KW-0963">Cytoplasm</keyword>
<keyword id="KW-0369">Histidine metabolism</keyword>
<keyword id="KW-0378">Hydrolase</keyword>
<keyword id="KW-0408">Iron</keyword>
<keyword id="KW-0479">Metal-binding</keyword>
<keyword id="KW-1185">Reference proteome</keyword>
<keyword id="KW-0862">Zinc</keyword>
<sequence length="395" mass="41146">MMILGNLRVATLSDGYGLIPDAAILIEGGRIQWVGPEAHLPPSAAPRHDMGGRLCTPALIDCHTHAVFAGTRAAEFEMRLKGASYAEVAAAGGGIVSTVMATRAAGADELLAASLPRIDAMLAGGVGTVEIKSGYGLDIETELRMLRVARRIGELRKVRVRTSFLGAHAVPPDHRGRPDAYLAEVVLPALKVAQDEGLVDAVDGFCEGIAFSPAQIAHLFAQAHKLRLPVKLHAEQLSNLGGAALAARHDALSADHLEYLDAEGVAALAAAGTVAVLLPGAFYALRETQAPPVAALRAAGVPMAVATDLNPGTSPLGALGLAMNMACTLFRLTPEEALAGTTIHAARALGLSDTGRIAPGFRADLAIWEAEHPAELSWRIGPAPLHARLHEGEFV</sequence>
<evidence type="ECO:0000255" key="1">
    <source>
        <dbReference type="HAMAP-Rule" id="MF_00372"/>
    </source>
</evidence>
<comment type="function">
    <text evidence="1">Catalyzes the hydrolytic cleavage of the carbon-nitrogen bond in imidazolone-5-propanoate to yield N-formimidoyl-L-glutamate. It is the third step in the universal histidine degradation pathway.</text>
</comment>
<comment type="catalytic activity">
    <reaction evidence="1">
        <text>4-imidazolone-5-propanoate + H2O = N-formimidoyl-L-glutamate</text>
        <dbReference type="Rhea" id="RHEA:23660"/>
        <dbReference type="ChEBI" id="CHEBI:15377"/>
        <dbReference type="ChEBI" id="CHEBI:58928"/>
        <dbReference type="ChEBI" id="CHEBI:77893"/>
        <dbReference type="EC" id="3.5.2.7"/>
    </reaction>
</comment>
<comment type="cofactor">
    <cofactor evidence="1">
        <name>Zn(2+)</name>
        <dbReference type="ChEBI" id="CHEBI:29105"/>
    </cofactor>
    <cofactor evidence="1">
        <name>Fe(3+)</name>
        <dbReference type="ChEBI" id="CHEBI:29034"/>
    </cofactor>
    <text evidence="1">Binds 1 zinc or iron ion per subunit.</text>
</comment>
<comment type="pathway">
    <text evidence="1">Amino-acid degradation; L-histidine degradation into L-glutamate; N-formimidoyl-L-glutamate from L-histidine: step 3/3.</text>
</comment>
<comment type="subcellular location">
    <subcellularLocation>
        <location evidence="1">Cytoplasm</location>
    </subcellularLocation>
</comment>
<comment type="similarity">
    <text evidence="1">Belongs to the metallo-dependent hydrolases superfamily. HutI family.</text>
</comment>